<sequence>MASHKHPGSPGWTGPICQDMAGTTPKASAPRPDLPRPGPEDHLEAQGSPSSNSSMTTRELQEYWRAQKCCWKHVKLLFEIASARIEERKVSKFVMYQIVVIQTGSFDSNKAVLERRYSDFETLQKKLLKTFREEIEDVVFPKKHLIGNFTEEMISERKLALKEYLSVLYAIRCVRRSREFIDFLTRPELKEAFGCLRAGQYTKALDILMRVVPLQEKLTAHCPVLLVPALCAMLVCHRDLDRPAEAFAVGERALQCLQAREGHRYYAPLLDAMARLAYLLGKDFVSLQKRLEESQLRKPALRGFTLKELTVQEYLS</sequence>
<evidence type="ECO:0000250" key="1">
    <source>
        <dbReference type="UniProtKB" id="Q5BK61"/>
    </source>
</evidence>
<evidence type="ECO:0000250" key="2">
    <source>
        <dbReference type="UniProtKB" id="Q6P4T1"/>
    </source>
</evidence>
<evidence type="ECO:0000250" key="3">
    <source>
        <dbReference type="UniProtKB" id="Q7Z614"/>
    </source>
</evidence>
<evidence type="ECO:0000250" key="4">
    <source>
        <dbReference type="UniProtKB" id="Q96L94"/>
    </source>
</evidence>
<evidence type="ECO:0000255" key="5">
    <source>
        <dbReference type="PROSITE-ProRule" id="PRU00147"/>
    </source>
</evidence>
<evidence type="ECO:0000256" key="6">
    <source>
        <dbReference type="SAM" id="MobiDB-lite"/>
    </source>
</evidence>
<evidence type="ECO:0000305" key="7"/>
<accession>Q2T9W1</accession>
<dbReference type="EMBL" id="BC111240">
    <property type="protein sequence ID" value="AAI11241.1"/>
    <property type="molecule type" value="mRNA"/>
</dbReference>
<dbReference type="RefSeq" id="NP_001033122.1">
    <property type="nucleotide sequence ID" value="NM_001038033.2"/>
</dbReference>
<dbReference type="RefSeq" id="XP_005218532.1">
    <property type="nucleotide sequence ID" value="XM_005218475.5"/>
</dbReference>
<dbReference type="SMR" id="Q2T9W1"/>
<dbReference type="FunCoup" id="Q2T9W1">
    <property type="interactions" value="446"/>
</dbReference>
<dbReference type="STRING" id="9913.ENSBTAP00000005164"/>
<dbReference type="PaxDb" id="9913-ENSBTAP00000005164"/>
<dbReference type="Ensembl" id="ENSBTAT00000005164.5">
    <property type="protein sequence ID" value="ENSBTAP00000005164.4"/>
    <property type="gene ID" value="ENSBTAG00000003961.6"/>
</dbReference>
<dbReference type="GeneID" id="505256"/>
<dbReference type="KEGG" id="bta:505256"/>
<dbReference type="CTD" id="124460"/>
<dbReference type="VEuPathDB" id="HostDB:ENSBTAG00000003961"/>
<dbReference type="VGNC" id="VGNC:35101">
    <property type="gene designation" value="SNX20"/>
</dbReference>
<dbReference type="eggNOG" id="KOG2101">
    <property type="taxonomic scope" value="Eukaryota"/>
</dbReference>
<dbReference type="GeneTree" id="ENSGT00530000063759"/>
<dbReference type="HOGENOM" id="CLU_059132_0_0_1"/>
<dbReference type="InParanoid" id="Q2T9W1"/>
<dbReference type="OMA" id="ISCQVRK"/>
<dbReference type="OrthoDB" id="10254720at2759"/>
<dbReference type="TreeFam" id="TF326807"/>
<dbReference type="Proteomes" id="UP000009136">
    <property type="component" value="Chromosome 18"/>
</dbReference>
<dbReference type="Bgee" id="ENSBTAG00000003961">
    <property type="expression patterns" value="Expressed in neutrophil and 81 other cell types or tissues"/>
</dbReference>
<dbReference type="GO" id="GO:0031901">
    <property type="term" value="C:early endosome membrane"/>
    <property type="evidence" value="ECO:0000250"/>
    <property type="project" value="UniProtKB"/>
</dbReference>
<dbReference type="GO" id="GO:0005634">
    <property type="term" value="C:nucleus"/>
    <property type="evidence" value="ECO:0007669"/>
    <property type="project" value="UniProtKB-SubCell"/>
</dbReference>
<dbReference type="GO" id="GO:0005886">
    <property type="term" value="C:plasma membrane"/>
    <property type="evidence" value="ECO:0007669"/>
    <property type="project" value="UniProtKB-SubCell"/>
</dbReference>
<dbReference type="GO" id="GO:1901981">
    <property type="term" value="F:phosphatidylinositol phosphate binding"/>
    <property type="evidence" value="ECO:0000318"/>
    <property type="project" value="GO_Central"/>
</dbReference>
<dbReference type="GO" id="GO:0032266">
    <property type="term" value="F:phosphatidylinositol-3-phosphate binding"/>
    <property type="evidence" value="ECO:0000250"/>
    <property type="project" value="UniProtKB"/>
</dbReference>
<dbReference type="GO" id="GO:0005546">
    <property type="term" value="F:phosphatidylinositol-4,5-bisphosphate binding"/>
    <property type="evidence" value="ECO:0000250"/>
    <property type="project" value="UniProtKB"/>
</dbReference>
<dbReference type="GO" id="GO:0015031">
    <property type="term" value="P:protein transport"/>
    <property type="evidence" value="ECO:0007669"/>
    <property type="project" value="UniProtKB-KW"/>
</dbReference>
<dbReference type="FunFam" id="3.30.1520.10:FF:000025">
    <property type="entry name" value="Sorting nexin 20"/>
    <property type="match status" value="1"/>
</dbReference>
<dbReference type="Gene3D" id="3.30.1520.10">
    <property type="entry name" value="Phox-like domain"/>
    <property type="match status" value="1"/>
</dbReference>
<dbReference type="InterPro" id="IPR001683">
    <property type="entry name" value="PX_dom"/>
</dbReference>
<dbReference type="InterPro" id="IPR036871">
    <property type="entry name" value="PX_dom_sf"/>
</dbReference>
<dbReference type="InterPro" id="IPR039937">
    <property type="entry name" value="SNX20/SNX21"/>
</dbReference>
<dbReference type="InterPro" id="IPR011990">
    <property type="entry name" value="TPR-like_helical_dom_sf"/>
</dbReference>
<dbReference type="PANTHER" id="PTHR20939">
    <property type="entry name" value="SORTING NEXIN 20, 21"/>
    <property type="match status" value="1"/>
</dbReference>
<dbReference type="PANTHER" id="PTHR20939:SF1">
    <property type="entry name" value="SORTING NEXIN-20"/>
    <property type="match status" value="1"/>
</dbReference>
<dbReference type="Pfam" id="PF00787">
    <property type="entry name" value="PX"/>
    <property type="match status" value="1"/>
</dbReference>
<dbReference type="SMART" id="SM00312">
    <property type="entry name" value="PX"/>
    <property type="match status" value="1"/>
</dbReference>
<dbReference type="SUPFAM" id="SSF64268">
    <property type="entry name" value="PX domain"/>
    <property type="match status" value="1"/>
</dbReference>
<dbReference type="SUPFAM" id="SSF48452">
    <property type="entry name" value="TPR-like"/>
    <property type="match status" value="1"/>
</dbReference>
<dbReference type="PROSITE" id="PS50195">
    <property type="entry name" value="PX"/>
    <property type="match status" value="1"/>
</dbReference>
<protein>
    <recommendedName>
        <fullName>Sorting nexin-20</fullName>
    </recommendedName>
</protein>
<organism>
    <name type="scientific">Bos taurus</name>
    <name type="common">Bovine</name>
    <dbReference type="NCBI Taxonomy" id="9913"/>
    <lineage>
        <taxon>Eukaryota</taxon>
        <taxon>Metazoa</taxon>
        <taxon>Chordata</taxon>
        <taxon>Craniata</taxon>
        <taxon>Vertebrata</taxon>
        <taxon>Euteleostomi</taxon>
        <taxon>Mammalia</taxon>
        <taxon>Eutheria</taxon>
        <taxon>Laurasiatheria</taxon>
        <taxon>Artiodactyla</taxon>
        <taxon>Ruminantia</taxon>
        <taxon>Pecora</taxon>
        <taxon>Bovidae</taxon>
        <taxon>Bovinae</taxon>
        <taxon>Bos</taxon>
    </lineage>
</organism>
<reference key="1">
    <citation type="submission" date="2005-12" db="EMBL/GenBank/DDBJ databases">
        <authorList>
            <consortium name="NIH - Mammalian Gene Collection (MGC) project"/>
        </authorList>
    </citation>
    <scope>NUCLEOTIDE SEQUENCE [LARGE SCALE MRNA]</scope>
    <source>
        <strain>Crossbred X Angus</strain>
        <tissue>Liver</tissue>
    </source>
</reference>
<feature type="chain" id="PRO_0000325819" description="Sorting nexin-20">
    <location>
        <begin position="1"/>
        <end position="316"/>
    </location>
</feature>
<feature type="domain" description="PX" evidence="5">
    <location>
        <begin position="74"/>
        <end position="191"/>
    </location>
</feature>
<feature type="region of interest" description="Disordered" evidence="6">
    <location>
        <begin position="1"/>
        <end position="57"/>
    </location>
</feature>
<feature type="compositionally biased region" description="Polar residues" evidence="6">
    <location>
        <begin position="47"/>
        <end position="57"/>
    </location>
</feature>
<feature type="binding site" evidence="2">
    <location>
        <position position="116"/>
    </location>
    <ligand>
        <name>a 1,2-diacyl-sn-glycero-3-phospho-(1D-myo-inositol-3-phosphate)</name>
        <dbReference type="ChEBI" id="CHEBI:58088"/>
    </ligand>
</feature>
<feature type="binding site" evidence="4">
    <location>
        <position position="118"/>
    </location>
    <ligand>
        <name>a 1,2-diacyl-sn-glycero-3-phospho-(1D-myo-inositol-3-phosphate)</name>
        <dbReference type="ChEBI" id="CHEBI:58088"/>
    </ligand>
</feature>
<feature type="binding site" evidence="4">
    <location>
        <position position="143"/>
    </location>
    <ligand>
        <name>a 1,2-diacyl-sn-glycero-3-phospho-(1D-myo-inositol-3-phosphate)</name>
        <dbReference type="ChEBI" id="CHEBI:58088"/>
    </ligand>
</feature>
<feature type="binding site" evidence="2">
    <location>
        <position position="157"/>
    </location>
    <ligand>
        <name>a 1,2-diacyl-sn-glycero-3-phospho-(1D-myo-inositol-3-phosphate)</name>
        <dbReference type="ChEBI" id="CHEBI:58088"/>
    </ligand>
</feature>
<feature type="modified residue" description="Phosphoserine" evidence="1">
    <location>
        <position position="3"/>
    </location>
</feature>
<proteinExistence type="evidence at transcript level"/>
<name>SNX20_BOVIN</name>
<comment type="function">
    <text evidence="3">May play a role in cellular vesicle trafficking. Has been proposed to function as a sorting protein that targets SELPLG into endosomes, but has no effect on SELPLG internalization from the cell surface, or on SELPLG-mediated cell-cell adhesion.</text>
</comment>
<comment type="subunit">
    <text evidence="3">Interacts with SELPLG. Interaction with SELPLG is controversial.</text>
</comment>
<comment type="subcellular location">
    <subcellularLocation>
        <location evidence="3">Early endosome membrane</location>
        <topology evidence="3">Peripheral membrane protein</topology>
        <orientation evidence="3">Cytoplasmic side</orientation>
    </subcellularLocation>
    <subcellularLocation>
        <location evidence="3">Cell membrane</location>
    </subcellularLocation>
    <subcellularLocation>
        <location evidence="3">Cytoplasm</location>
    </subcellularLocation>
    <subcellularLocation>
        <location evidence="3">Nucleus</location>
    </subcellularLocation>
</comment>
<comment type="domain">
    <text evidence="3">The PX domain binds phosphatidylinositol 3-phosphate which is necessary for localization to the endosomes.</text>
</comment>
<comment type="similarity">
    <text evidence="7">Belongs to the sorting nexin family.</text>
</comment>
<keyword id="KW-1003">Cell membrane</keyword>
<keyword id="KW-0963">Cytoplasm</keyword>
<keyword id="KW-0967">Endosome</keyword>
<keyword id="KW-0446">Lipid-binding</keyword>
<keyword id="KW-0472">Membrane</keyword>
<keyword id="KW-0539">Nucleus</keyword>
<keyword id="KW-0597">Phosphoprotein</keyword>
<keyword id="KW-0653">Protein transport</keyword>
<keyword id="KW-1185">Reference proteome</keyword>
<keyword id="KW-0813">Transport</keyword>
<gene>
    <name type="primary">SNX20</name>
</gene>